<dbReference type="EMBL" id="AE005174">
    <property type="protein sequence ID" value="AAG59493.1"/>
    <property type="status" value="ALT_INIT"/>
    <property type="molecule type" value="Genomic_DNA"/>
</dbReference>
<dbReference type="EMBL" id="BA000007">
    <property type="protein sequence ID" value="BAB38693.2"/>
    <property type="molecule type" value="Genomic_DNA"/>
</dbReference>
<dbReference type="RefSeq" id="NP_313297.2">
    <property type="nucleotide sequence ID" value="NC_002695.1"/>
</dbReference>
<dbReference type="RefSeq" id="WP_001295734.1">
    <property type="nucleotide sequence ID" value="NZ_VOAI01000002.1"/>
</dbReference>
<dbReference type="SMR" id="P69857"/>
<dbReference type="STRING" id="155864.Z5907"/>
<dbReference type="GeneID" id="913696"/>
<dbReference type="GeneID" id="93777530"/>
<dbReference type="KEGG" id="ece:Z5907"/>
<dbReference type="KEGG" id="ecs:ECs_5270"/>
<dbReference type="PATRIC" id="fig|386585.9.peg.5504"/>
<dbReference type="eggNOG" id="COG1452">
    <property type="taxonomic scope" value="Bacteria"/>
</dbReference>
<dbReference type="HOGENOM" id="CLU_081853_2_0_6"/>
<dbReference type="OMA" id="YFKRNSG"/>
<dbReference type="Proteomes" id="UP000000558">
    <property type="component" value="Chromosome"/>
</dbReference>
<dbReference type="Proteomes" id="UP000002519">
    <property type="component" value="Chromosome"/>
</dbReference>
<dbReference type="GO" id="GO:0009279">
    <property type="term" value="C:cell outer membrane"/>
    <property type="evidence" value="ECO:0007669"/>
    <property type="project" value="UniProtKB-SubCell"/>
</dbReference>
<dbReference type="GO" id="GO:0046930">
    <property type="term" value="C:pore complex"/>
    <property type="evidence" value="ECO:0007669"/>
    <property type="project" value="UniProtKB-KW"/>
</dbReference>
<dbReference type="GO" id="GO:0015288">
    <property type="term" value="F:porin activity"/>
    <property type="evidence" value="ECO:0007669"/>
    <property type="project" value="UniProtKB-KW"/>
</dbReference>
<dbReference type="GO" id="GO:0006811">
    <property type="term" value="P:monoatomic ion transport"/>
    <property type="evidence" value="ECO:0007669"/>
    <property type="project" value="UniProtKB-KW"/>
</dbReference>
<dbReference type="GO" id="GO:0015772">
    <property type="term" value="P:oligosaccharide transport"/>
    <property type="evidence" value="ECO:0007669"/>
    <property type="project" value="TreeGrafter"/>
</dbReference>
<dbReference type="FunFam" id="2.40.160.40:FF:000002">
    <property type="entry name" value="N-acetylneuraminic acid outer membrane channel protein NanC"/>
    <property type="match status" value="1"/>
</dbReference>
<dbReference type="Gene3D" id="2.40.160.40">
    <property type="entry name" value="monomeric porin ompg"/>
    <property type="match status" value="1"/>
</dbReference>
<dbReference type="InterPro" id="IPR053713">
    <property type="entry name" value="Bact_OM_Channel_sf"/>
</dbReference>
<dbReference type="InterPro" id="IPR009331">
    <property type="entry name" value="Oligogalacturonate-sp_porin"/>
</dbReference>
<dbReference type="PANTHER" id="PTHR38105:SF2">
    <property type="entry name" value="N-ACETYLNEURAMINIC ACID OUTER MEMBRANE CHANNEL PROTEIN NANC-RELATED"/>
    <property type="match status" value="1"/>
</dbReference>
<dbReference type="PANTHER" id="PTHR38105">
    <property type="entry name" value="OUTER MEMBRANE PROTEIN-RELATED-RELATED"/>
    <property type="match status" value="1"/>
</dbReference>
<dbReference type="Pfam" id="PF06178">
    <property type="entry name" value="KdgM"/>
    <property type="match status" value="1"/>
</dbReference>
<proteinExistence type="inferred from homology"/>
<gene>
    <name type="primary">nanC</name>
    <name type="ordered locus">Z5907</name>
    <name type="ordered locus">ECs5270</name>
</gene>
<accession>P69857</accession>
<accession>P39372</accession>
<evidence type="ECO:0000250" key="1">
    <source>
        <dbReference type="UniProtKB" id="P69856"/>
    </source>
</evidence>
<evidence type="ECO:0000255" key="2"/>
<evidence type="ECO:0000305" key="3"/>
<feature type="signal peptide" evidence="2">
    <location>
        <begin position="1"/>
        <end position="23"/>
    </location>
</feature>
<feature type="chain" id="PRO_0000016602" description="N-acetylneuraminic acid outer membrane channel protein NanC">
    <location>
        <begin position="24"/>
        <end position="238"/>
    </location>
</feature>
<feature type="topological domain" description="Periplasmic" evidence="1">
    <location>
        <begin position="24"/>
        <end position="25"/>
    </location>
</feature>
<feature type="transmembrane region" evidence="1">
    <location>
        <begin position="26"/>
        <end position="32"/>
    </location>
</feature>
<feature type="topological domain" description="Extracellular" evidence="1">
    <location>
        <begin position="33"/>
        <end position="39"/>
    </location>
</feature>
<feature type="transmembrane region" evidence="1">
    <location>
        <begin position="40"/>
        <end position="49"/>
    </location>
</feature>
<feature type="topological domain" description="Periplasmic" evidence="1">
    <location>
        <begin position="50"/>
        <end position="52"/>
    </location>
</feature>
<feature type="transmembrane region" evidence="1">
    <location>
        <begin position="53"/>
        <end position="61"/>
    </location>
</feature>
<feature type="topological domain" description="Extracellular" evidence="1">
    <location>
        <begin position="62"/>
        <end position="76"/>
    </location>
</feature>
<feature type="transmembrane region" evidence="1">
    <location>
        <begin position="77"/>
        <end position="86"/>
    </location>
</feature>
<feature type="topological domain" description="Periplasmic" evidence="1">
    <location>
        <begin position="87"/>
        <end position="91"/>
    </location>
</feature>
<feature type="transmembrane region" evidence="1">
    <location>
        <begin position="92"/>
        <end position="102"/>
    </location>
</feature>
<feature type="topological domain" description="Extracellular" evidence="1">
    <location>
        <begin position="103"/>
        <end position="107"/>
    </location>
</feature>
<feature type="transmembrane region" evidence="1">
    <location>
        <begin position="108"/>
        <end position="117"/>
    </location>
</feature>
<feature type="topological domain" description="Periplasmic" evidence="1">
    <location>
        <begin position="118"/>
        <end position="122"/>
    </location>
</feature>
<feature type="transmembrane region" evidence="1">
    <location>
        <begin position="123"/>
        <end position="132"/>
    </location>
</feature>
<feature type="topological domain" description="Extracellular" evidence="1">
    <location>
        <begin position="133"/>
        <end position="151"/>
    </location>
</feature>
<feature type="transmembrane region" evidence="1">
    <location>
        <begin position="152"/>
        <end position="159"/>
    </location>
</feature>
<feature type="topological domain" description="Periplasmic" evidence="1">
    <location>
        <begin position="160"/>
        <end position="164"/>
    </location>
</feature>
<feature type="transmembrane region" evidence="1">
    <location>
        <begin position="165"/>
        <end position="173"/>
    </location>
</feature>
<feature type="topological domain" description="Extracellular" evidence="1">
    <location>
        <begin position="174"/>
        <end position="190"/>
    </location>
</feature>
<feature type="transmembrane region" evidence="1">
    <location>
        <begin position="191"/>
        <end position="200"/>
    </location>
</feature>
<feature type="topological domain" description="Periplasmic" evidence="1">
    <location>
        <begin position="201"/>
        <end position="203"/>
    </location>
</feature>
<feature type="transmembrane region" evidence="1">
    <location>
        <begin position="204"/>
        <end position="212"/>
    </location>
</feature>
<feature type="topological domain" description="Extracellular" evidence="1">
    <location>
        <begin position="213"/>
        <end position="228"/>
    </location>
</feature>
<feature type="transmembrane region" evidence="1">
    <location>
        <begin position="229"/>
        <end position="236"/>
    </location>
</feature>
<feature type="topological domain" description="Periplasmic" evidence="1">
    <location>
        <begin position="237"/>
        <end position="238"/>
    </location>
</feature>
<keyword id="KW-0998">Cell outer membrane</keyword>
<keyword id="KW-0406">Ion transport</keyword>
<keyword id="KW-0472">Membrane</keyword>
<keyword id="KW-0626">Porin</keyword>
<keyword id="KW-1185">Reference proteome</keyword>
<keyword id="KW-0732">Signal</keyword>
<keyword id="KW-0762">Sugar transport</keyword>
<keyword id="KW-0812">Transmembrane</keyword>
<keyword id="KW-1134">Transmembrane beta strand</keyword>
<keyword id="KW-0813">Transport</keyword>
<sequence length="238" mass="27888">MKKAKILSGVLLLCFSSPLISQAATLDVRGGYRSGSHAYETRLKVSEGWQNGWWASMESNTWNTIHDNKKENAALNDVQVEVNYAIKLDDQWTVRPGMLTHFSSNGTRYGPYVKLSWDATKDLNFGIRYRYDWKAYRQQDLSGDMSRDNVHRWDGYVTYHINSDFTFAWQTTLYSKQNDYRYANHKKWATENAFVLQYHMTPDITPYIEYDYLDRQGVYNGRDNLSENSYRIGVSFKL</sequence>
<comment type="function">
    <text evidence="1">Outer membrane channel protein allowing the entry of N-acetylneuraminic acid (Neu5Ac, the most abundant sialic acid on host cell surfaces) into the bacteria. NanC proteins form high-conductance channels which are open at low membrane potentials and which have a weak anion selectivity.</text>
</comment>
<comment type="catalytic activity">
    <reaction evidence="1">
        <text>N-acetylneuraminate(in) = N-acetylneuraminate(out)</text>
        <dbReference type="Rhea" id="RHEA:28991"/>
        <dbReference type="ChEBI" id="CHEBI:35418"/>
    </reaction>
</comment>
<comment type="subunit">
    <text evidence="1">Monomer.</text>
</comment>
<comment type="subcellular location">
    <subcellularLocation>
        <location evidence="1">Cell outer membrane</location>
        <topology evidence="1">Multi-pass membrane protein</topology>
    </subcellularLocation>
</comment>
<comment type="similarity">
    <text evidence="3">Belongs to the oligogalacturonate-specific porin KdgM (TC 1.B.35) family. NanC subfamily.</text>
</comment>
<comment type="sequence caution" evidence="3">
    <conflict type="erroneous initiation">
        <sequence resource="EMBL-CDS" id="AAG59493"/>
    </conflict>
    <text>Extended N-terminus.</text>
</comment>
<organism>
    <name type="scientific">Escherichia coli O157:H7</name>
    <dbReference type="NCBI Taxonomy" id="83334"/>
    <lineage>
        <taxon>Bacteria</taxon>
        <taxon>Pseudomonadati</taxon>
        <taxon>Pseudomonadota</taxon>
        <taxon>Gammaproteobacteria</taxon>
        <taxon>Enterobacterales</taxon>
        <taxon>Enterobacteriaceae</taxon>
        <taxon>Escherichia</taxon>
    </lineage>
</organism>
<name>NANC_ECO57</name>
<protein>
    <recommendedName>
        <fullName evidence="1">N-acetylneuraminic acid outer membrane channel protein NanC</fullName>
        <shortName evidence="1">Porin NanC</shortName>
    </recommendedName>
</protein>
<reference key="1">
    <citation type="journal article" date="2001" name="Nature">
        <title>Genome sequence of enterohaemorrhagic Escherichia coli O157:H7.</title>
        <authorList>
            <person name="Perna N.T."/>
            <person name="Plunkett G. III"/>
            <person name="Burland V."/>
            <person name="Mau B."/>
            <person name="Glasner J.D."/>
            <person name="Rose D.J."/>
            <person name="Mayhew G.F."/>
            <person name="Evans P.S."/>
            <person name="Gregor J."/>
            <person name="Kirkpatrick H.A."/>
            <person name="Posfai G."/>
            <person name="Hackett J."/>
            <person name="Klink S."/>
            <person name="Boutin A."/>
            <person name="Shao Y."/>
            <person name="Miller L."/>
            <person name="Grotbeck E.J."/>
            <person name="Davis N.W."/>
            <person name="Lim A."/>
            <person name="Dimalanta E.T."/>
            <person name="Potamousis K."/>
            <person name="Apodaca J."/>
            <person name="Anantharaman T.S."/>
            <person name="Lin J."/>
            <person name="Yen G."/>
            <person name="Schwartz D.C."/>
            <person name="Welch R.A."/>
            <person name="Blattner F.R."/>
        </authorList>
    </citation>
    <scope>NUCLEOTIDE SEQUENCE [LARGE SCALE GENOMIC DNA]</scope>
    <source>
        <strain>O157:H7 / EDL933 / ATCC 700927 / EHEC</strain>
    </source>
</reference>
<reference key="2">
    <citation type="journal article" date="2001" name="DNA Res.">
        <title>Complete genome sequence of enterohemorrhagic Escherichia coli O157:H7 and genomic comparison with a laboratory strain K-12.</title>
        <authorList>
            <person name="Hayashi T."/>
            <person name="Makino K."/>
            <person name="Ohnishi M."/>
            <person name="Kurokawa K."/>
            <person name="Ishii K."/>
            <person name="Yokoyama K."/>
            <person name="Han C.-G."/>
            <person name="Ohtsubo E."/>
            <person name="Nakayama K."/>
            <person name="Murata T."/>
            <person name="Tanaka M."/>
            <person name="Tobe T."/>
            <person name="Iida T."/>
            <person name="Takami H."/>
            <person name="Honda T."/>
            <person name="Sasakawa C."/>
            <person name="Ogasawara N."/>
            <person name="Yasunaga T."/>
            <person name="Kuhara S."/>
            <person name="Shiba T."/>
            <person name="Hattori M."/>
            <person name="Shinagawa H."/>
        </authorList>
    </citation>
    <scope>NUCLEOTIDE SEQUENCE [LARGE SCALE GENOMIC DNA]</scope>
    <source>
        <strain>O157:H7 / Sakai / RIMD 0509952 / EHEC</strain>
    </source>
</reference>